<feature type="chain" id="PRO_0000407247" description="N(2)-fixation sustaining protein CowN">
    <location>
        <begin position="1"/>
        <end position="95"/>
    </location>
</feature>
<evidence type="ECO:0000255" key="1">
    <source>
        <dbReference type="HAMAP-Rule" id="MF_02117"/>
    </source>
</evidence>
<accession>D3RQU0</accession>
<keyword id="KW-0535">Nitrogen fixation</keyword>
<keyword id="KW-1185">Reference proteome</keyword>
<protein>
    <recommendedName>
        <fullName evidence="1">N(2)-fixation sustaining protein CowN</fullName>
    </recommendedName>
    <alternativeName>
        <fullName evidence="1">CO weal-nitrogenase</fullName>
    </alternativeName>
</protein>
<name>COWN_ALLVD</name>
<organism>
    <name type="scientific">Allochromatium vinosum (strain ATCC 17899 / DSM 180 / NBRC 103801 / NCIMB 10441 / D)</name>
    <name type="common">Chromatium vinosum</name>
    <dbReference type="NCBI Taxonomy" id="572477"/>
    <lineage>
        <taxon>Bacteria</taxon>
        <taxon>Pseudomonadati</taxon>
        <taxon>Pseudomonadota</taxon>
        <taxon>Gammaproteobacteria</taxon>
        <taxon>Chromatiales</taxon>
        <taxon>Chromatiaceae</taxon>
        <taxon>Allochromatium</taxon>
    </lineage>
</organism>
<proteinExistence type="inferred from homology"/>
<comment type="function">
    <text evidence="1">Is required to sustain N(2)-dependent growth in the presence of low levels of carbon monoxide (CO). Probably acts by protecting the N(2) fixation ability of the nitrogenase complex, which is inactivated in the presence of CO.</text>
</comment>
<comment type="similarity">
    <text evidence="1">Belongs to the CowN family.</text>
</comment>
<gene>
    <name evidence="1" type="primary">cowN</name>
    <name type="ordered locus">Alvin_2868</name>
</gene>
<dbReference type="EMBL" id="CP001896">
    <property type="protein sequence ID" value="ADC63774.1"/>
    <property type="molecule type" value="Genomic_DNA"/>
</dbReference>
<dbReference type="RefSeq" id="WP_012972039.1">
    <property type="nucleotide sequence ID" value="NC_013851.1"/>
</dbReference>
<dbReference type="STRING" id="572477.Alvin_2868"/>
<dbReference type="KEGG" id="alv:Alvin_2868"/>
<dbReference type="eggNOG" id="ENOG50330SG">
    <property type="taxonomic scope" value="Bacteria"/>
</dbReference>
<dbReference type="HOGENOM" id="CLU_149349_0_0_6"/>
<dbReference type="OrthoDB" id="7689335at2"/>
<dbReference type="Proteomes" id="UP000001441">
    <property type="component" value="Chromosome"/>
</dbReference>
<dbReference type="GO" id="GO:0009399">
    <property type="term" value="P:nitrogen fixation"/>
    <property type="evidence" value="ECO:0007669"/>
    <property type="project" value="UniProtKB-UniRule"/>
</dbReference>
<dbReference type="HAMAP" id="MF_02117">
    <property type="entry name" value="CowN"/>
    <property type="match status" value="1"/>
</dbReference>
<dbReference type="InterPro" id="IPR024899">
    <property type="entry name" value="CowN"/>
</dbReference>
<dbReference type="NCBIfam" id="NF033689">
    <property type="entry name" value="N2Fix_CO_CowN"/>
    <property type="match status" value="1"/>
</dbReference>
<dbReference type="Pfam" id="PF20543">
    <property type="entry name" value="CowN"/>
    <property type="match status" value="1"/>
</dbReference>
<reference key="1">
    <citation type="journal article" date="2011" name="Stand. Genomic Sci.">
        <title>Complete genome sequence of Allochromatium vinosum DSM 180(T).</title>
        <authorList>
            <person name="Weissgerber T."/>
            <person name="Zigann R."/>
            <person name="Bruce D."/>
            <person name="Chang Y.J."/>
            <person name="Detter J.C."/>
            <person name="Han C."/>
            <person name="Hauser L."/>
            <person name="Jeffries C.D."/>
            <person name="Land M."/>
            <person name="Munk A.C."/>
            <person name="Tapia R."/>
            <person name="Dahl C."/>
        </authorList>
    </citation>
    <scope>NUCLEOTIDE SEQUENCE [LARGE SCALE GENOMIC DNA]</scope>
    <source>
        <strain>ATCC 17899 / DSM 180 / NBRC 103801 / NCIMB 10441 / D</strain>
    </source>
</reference>
<sequence>MSQAAVKIDRYITFEGIECDEQARRVLDCIRDCIEAPEASSWSAYFERKLDEITRMGQDELFVVGSQVNYIRALFEHHGHREGLDLLDRIEDECC</sequence>